<keyword id="KW-0687">Ribonucleoprotein</keyword>
<keyword id="KW-0689">Ribosomal protein</keyword>
<reference key="1">
    <citation type="journal article" date="2007" name="Environ. Microbiol.">
        <title>Whole-genome analysis of the ammonia-oxidizing bacterium, Nitrosomonas eutropha C91: implications for niche adaptation.</title>
        <authorList>
            <person name="Stein L.Y."/>
            <person name="Arp D.J."/>
            <person name="Berube P.M."/>
            <person name="Chain P.S."/>
            <person name="Hauser L."/>
            <person name="Jetten M.S."/>
            <person name="Klotz M.G."/>
            <person name="Larimer F.W."/>
            <person name="Norton J.M."/>
            <person name="Op den Camp H.J.M."/>
            <person name="Shin M."/>
            <person name="Wei X."/>
        </authorList>
    </citation>
    <scope>NUCLEOTIDE SEQUENCE [LARGE SCALE GENOMIC DNA]</scope>
    <source>
        <strain>DSM 101675 / C91 / Nm57</strain>
    </source>
</reference>
<sequence length="78" mass="9152">MARVCQVTGKRPMSGHHVSHANNKTKRRFLPNLQSRRFWLESENRWIRLRLTNAALRTIDKNGIDVVIADMRARGERI</sequence>
<proteinExistence type="inferred from homology"/>
<accession>Q0AHY1</accession>
<organism>
    <name type="scientific">Nitrosomonas eutropha (strain DSM 101675 / C91 / Nm57)</name>
    <dbReference type="NCBI Taxonomy" id="335283"/>
    <lineage>
        <taxon>Bacteria</taxon>
        <taxon>Pseudomonadati</taxon>
        <taxon>Pseudomonadota</taxon>
        <taxon>Betaproteobacteria</taxon>
        <taxon>Nitrosomonadales</taxon>
        <taxon>Nitrosomonadaceae</taxon>
        <taxon>Nitrosomonas</taxon>
    </lineage>
</organism>
<dbReference type="EMBL" id="CP000450">
    <property type="protein sequence ID" value="ABI59051.1"/>
    <property type="molecule type" value="Genomic_DNA"/>
</dbReference>
<dbReference type="RefSeq" id="WP_011633876.1">
    <property type="nucleotide sequence ID" value="NC_008344.1"/>
</dbReference>
<dbReference type="SMR" id="Q0AHY1"/>
<dbReference type="STRING" id="335283.Neut_0781"/>
<dbReference type="KEGG" id="net:Neut_0781"/>
<dbReference type="eggNOG" id="COG0227">
    <property type="taxonomic scope" value="Bacteria"/>
</dbReference>
<dbReference type="HOGENOM" id="CLU_064548_3_1_4"/>
<dbReference type="OrthoDB" id="9805609at2"/>
<dbReference type="Proteomes" id="UP000001966">
    <property type="component" value="Chromosome"/>
</dbReference>
<dbReference type="GO" id="GO:0022625">
    <property type="term" value="C:cytosolic large ribosomal subunit"/>
    <property type="evidence" value="ECO:0007669"/>
    <property type="project" value="TreeGrafter"/>
</dbReference>
<dbReference type="GO" id="GO:0003735">
    <property type="term" value="F:structural constituent of ribosome"/>
    <property type="evidence" value="ECO:0007669"/>
    <property type="project" value="InterPro"/>
</dbReference>
<dbReference type="GO" id="GO:0006412">
    <property type="term" value="P:translation"/>
    <property type="evidence" value="ECO:0007669"/>
    <property type="project" value="UniProtKB-UniRule"/>
</dbReference>
<dbReference type="FunFam" id="2.30.170.40:FF:000001">
    <property type="entry name" value="50S ribosomal protein L28"/>
    <property type="match status" value="1"/>
</dbReference>
<dbReference type="Gene3D" id="2.30.170.40">
    <property type="entry name" value="Ribosomal protein L28/L24"/>
    <property type="match status" value="1"/>
</dbReference>
<dbReference type="HAMAP" id="MF_00373">
    <property type="entry name" value="Ribosomal_bL28"/>
    <property type="match status" value="1"/>
</dbReference>
<dbReference type="InterPro" id="IPR026569">
    <property type="entry name" value="Ribosomal_bL28"/>
</dbReference>
<dbReference type="InterPro" id="IPR034704">
    <property type="entry name" value="Ribosomal_bL28/bL31-like_sf"/>
</dbReference>
<dbReference type="InterPro" id="IPR001383">
    <property type="entry name" value="Ribosomal_bL28_bact-type"/>
</dbReference>
<dbReference type="InterPro" id="IPR037147">
    <property type="entry name" value="Ribosomal_bL28_sf"/>
</dbReference>
<dbReference type="NCBIfam" id="TIGR00009">
    <property type="entry name" value="L28"/>
    <property type="match status" value="1"/>
</dbReference>
<dbReference type="PANTHER" id="PTHR13528">
    <property type="entry name" value="39S RIBOSOMAL PROTEIN L28, MITOCHONDRIAL"/>
    <property type="match status" value="1"/>
</dbReference>
<dbReference type="PANTHER" id="PTHR13528:SF2">
    <property type="entry name" value="LARGE RIBOSOMAL SUBUNIT PROTEIN BL28M"/>
    <property type="match status" value="1"/>
</dbReference>
<dbReference type="Pfam" id="PF00830">
    <property type="entry name" value="Ribosomal_L28"/>
    <property type="match status" value="1"/>
</dbReference>
<dbReference type="SUPFAM" id="SSF143800">
    <property type="entry name" value="L28p-like"/>
    <property type="match status" value="1"/>
</dbReference>
<comment type="similarity">
    <text evidence="1">Belongs to the bacterial ribosomal protein bL28 family.</text>
</comment>
<gene>
    <name evidence="1" type="primary">rpmB</name>
    <name type="ordered locus">Neut_0781</name>
</gene>
<evidence type="ECO:0000255" key="1">
    <source>
        <dbReference type="HAMAP-Rule" id="MF_00373"/>
    </source>
</evidence>
<evidence type="ECO:0000256" key="2">
    <source>
        <dbReference type="SAM" id="MobiDB-lite"/>
    </source>
</evidence>
<evidence type="ECO:0000305" key="3"/>
<protein>
    <recommendedName>
        <fullName evidence="1">Large ribosomal subunit protein bL28</fullName>
    </recommendedName>
    <alternativeName>
        <fullName evidence="3">50S ribosomal protein L28</fullName>
    </alternativeName>
</protein>
<name>RL28_NITEC</name>
<feature type="chain" id="PRO_1000007284" description="Large ribosomal subunit protein bL28">
    <location>
        <begin position="1"/>
        <end position="78"/>
    </location>
</feature>
<feature type="region of interest" description="Disordered" evidence="2">
    <location>
        <begin position="1"/>
        <end position="25"/>
    </location>
</feature>
<feature type="compositionally biased region" description="Basic residues" evidence="2">
    <location>
        <begin position="13"/>
        <end position="25"/>
    </location>
</feature>